<comment type="function">
    <text evidence="1">Probably catalyzes the hydrolysis of L-ascorbate-6-P into 3-keto-L-gulonate-6-P. Is essential for L-ascorbate utilization under anaerobic conditions.</text>
</comment>
<comment type="catalytic activity">
    <reaction evidence="1">
        <text>L-ascorbate 6-phosphate + H2O = 3-dehydro-L-gulonate 6-phosphate</text>
        <dbReference type="Rhea" id="RHEA:28803"/>
        <dbReference type="ChEBI" id="CHEBI:15377"/>
        <dbReference type="ChEBI" id="CHEBI:58774"/>
        <dbReference type="ChEBI" id="CHEBI:61698"/>
    </reaction>
</comment>
<comment type="cofactor">
    <cofactor evidence="1">
        <name>a divalent metal cation</name>
        <dbReference type="ChEBI" id="CHEBI:60240"/>
    </cofactor>
</comment>
<comment type="pathway">
    <text evidence="1">Cofactor degradation; L-ascorbate degradation; D-xylulose 5-phosphate from L-ascorbate: step 1/4.</text>
</comment>
<comment type="subcellular location">
    <subcellularLocation>
        <location evidence="1">Cytoplasm</location>
    </subcellularLocation>
</comment>
<comment type="induction">
    <text evidence="1">Induced by L-ascorbate. Repressed by UlaR.</text>
</comment>
<comment type="similarity">
    <text evidence="1">Belongs to the UlaG family.</text>
</comment>
<comment type="sequence caution" evidence="2">
    <conflict type="erroneous initiation">
        <sequence resource="EMBL-CDS" id="AAN45764"/>
    </conflict>
</comment>
<comment type="sequence caution" evidence="2">
    <conflict type="erroneous initiation">
        <sequence resource="EMBL-CDS" id="AAP19546"/>
    </conflict>
</comment>
<dbReference type="EC" id="3.1.1.-" evidence="1"/>
<dbReference type="EMBL" id="AE005674">
    <property type="protein sequence ID" value="AAN45764.1"/>
    <property type="status" value="ALT_INIT"/>
    <property type="molecule type" value="Genomic_DNA"/>
</dbReference>
<dbReference type="EMBL" id="AE014073">
    <property type="protein sequence ID" value="AAP19546.1"/>
    <property type="status" value="ALT_INIT"/>
    <property type="molecule type" value="Genomic_DNA"/>
</dbReference>
<dbReference type="RefSeq" id="WP_005053827.1">
    <property type="nucleotide sequence ID" value="NZ_WPGW01000113.1"/>
</dbReference>
<dbReference type="SMR" id="Q83IJ0"/>
<dbReference type="STRING" id="198214.SF4347"/>
<dbReference type="PaxDb" id="198214-SF4347"/>
<dbReference type="KEGG" id="sfl:SF4347"/>
<dbReference type="KEGG" id="sfx:S4617"/>
<dbReference type="PATRIC" id="fig|198214.7.peg.5126"/>
<dbReference type="HOGENOM" id="CLU_074775_0_0_6"/>
<dbReference type="UniPathway" id="UPA00263">
    <property type="reaction ID" value="UER00377"/>
</dbReference>
<dbReference type="Proteomes" id="UP000001006">
    <property type="component" value="Chromosome"/>
</dbReference>
<dbReference type="Proteomes" id="UP000002673">
    <property type="component" value="Chromosome"/>
</dbReference>
<dbReference type="GO" id="GO:0005737">
    <property type="term" value="C:cytoplasm"/>
    <property type="evidence" value="ECO:0007669"/>
    <property type="project" value="UniProtKB-SubCell"/>
</dbReference>
<dbReference type="GO" id="GO:0035460">
    <property type="term" value="F:L-ascorbate 6-phosphate lactonase activity"/>
    <property type="evidence" value="ECO:0007669"/>
    <property type="project" value="InterPro"/>
</dbReference>
<dbReference type="GO" id="GO:0030145">
    <property type="term" value="F:manganese ion binding"/>
    <property type="evidence" value="ECO:0007669"/>
    <property type="project" value="InterPro"/>
</dbReference>
<dbReference type="GO" id="GO:0019854">
    <property type="term" value="P:L-ascorbic acid catabolic process"/>
    <property type="evidence" value="ECO:0007669"/>
    <property type="project" value="UniProtKB-UniRule"/>
</dbReference>
<dbReference type="CDD" id="cd16284">
    <property type="entry name" value="UlaG-like_MBL-fold"/>
    <property type="match status" value="1"/>
</dbReference>
<dbReference type="FunFam" id="3.60.15.10:FF:000004">
    <property type="entry name" value="Probable L-ascorbate-6-phosphate lactonase UlaG"/>
    <property type="match status" value="1"/>
</dbReference>
<dbReference type="Gene3D" id="3.60.15.10">
    <property type="entry name" value="Ribonuclease Z/Hydroxyacylglutathione hydrolase-like"/>
    <property type="match status" value="1"/>
</dbReference>
<dbReference type="HAMAP" id="MF_01266">
    <property type="entry name" value="UlaG"/>
    <property type="match status" value="1"/>
</dbReference>
<dbReference type="InterPro" id="IPR023951">
    <property type="entry name" value="L-ascorbate_6P_UlaG"/>
</dbReference>
<dbReference type="InterPro" id="IPR001279">
    <property type="entry name" value="Metallo-B-lactamas"/>
</dbReference>
<dbReference type="InterPro" id="IPR036866">
    <property type="entry name" value="RibonucZ/Hydroxyglut_hydro"/>
</dbReference>
<dbReference type="InterPro" id="IPR048021">
    <property type="entry name" value="UlaG-like_MBL-fold"/>
</dbReference>
<dbReference type="InterPro" id="IPR050114">
    <property type="entry name" value="UPF0173_UPF0282_UlaG_hydrolase"/>
</dbReference>
<dbReference type="NCBIfam" id="NF008688">
    <property type="entry name" value="PRK11709.1"/>
    <property type="match status" value="1"/>
</dbReference>
<dbReference type="PANTHER" id="PTHR43546:SF9">
    <property type="entry name" value="L-ASCORBATE-6-PHOSPHATE LACTONASE ULAG-RELATED"/>
    <property type="match status" value="1"/>
</dbReference>
<dbReference type="PANTHER" id="PTHR43546">
    <property type="entry name" value="UPF0173 METAL-DEPENDENT HYDROLASE MJ1163-RELATED"/>
    <property type="match status" value="1"/>
</dbReference>
<dbReference type="Pfam" id="PF12706">
    <property type="entry name" value="Lactamase_B_2"/>
    <property type="match status" value="1"/>
</dbReference>
<dbReference type="SUPFAM" id="SSF56281">
    <property type="entry name" value="Metallo-hydrolase/oxidoreductase"/>
    <property type="match status" value="1"/>
</dbReference>
<proteinExistence type="inferred from homology"/>
<reference key="1">
    <citation type="journal article" date="2002" name="Nucleic Acids Res.">
        <title>Genome sequence of Shigella flexneri 2a: insights into pathogenicity through comparison with genomes of Escherichia coli K12 and O157.</title>
        <authorList>
            <person name="Jin Q."/>
            <person name="Yuan Z."/>
            <person name="Xu J."/>
            <person name="Wang Y."/>
            <person name="Shen Y."/>
            <person name="Lu W."/>
            <person name="Wang J."/>
            <person name="Liu H."/>
            <person name="Yang J."/>
            <person name="Yang F."/>
            <person name="Zhang X."/>
            <person name="Zhang J."/>
            <person name="Yang G."/>
            <person name="Wu H."/>
            <person name="Qu D."/>
            <person name="Dong J."/>
            <person name="Sun L."/>
            <person name="Xue Y."/>
            <person name="Zhao A."/>
            <person name="Gao Y."/>
            <person name="Zhu J."/>
            <person name="Kan B."/>
            <person name="Ding K."/>
            <person name="Chen S."/>
            <person name="Cheng H."/>
            <person name="Yao Z."/>
            <person name="He B."/>
            <person name="Chen R."/>
            <person name="Ma D."/>
            <person name="Qiang B."/>
            <person name="Wen Y."/>
            <person name="Hou Y."/>
            <person name="Yu J."/>
        </authorList>
    </citation>
    <scope>NUCLEOTIDE SEQUENCE [LARGE SCALE GENOMIC DNA]</scope>
    <source>
        <strain>301 / Serotype 2a</strain>
    </source>
</reference>
<reference key="2">
    <citation type="journal article" date="2003" name="Infect. Immun.">
        <title>Complete genome sequence and comparative genomics of Shigella flexneri serotype 2a strain 2457T.</title>
        <authorList>
            <person name="Wei J."/>
            <person name="Goldberg M.B."/>
            <person name="Burland V."/>
            <person name="Venkatesan M.M."/>
            <person name="Deng W."/>
            <person name="Fournier G."/>
            <person name="Mayhew G.F."/>
            <person name="Plunkett G. III"/>
            <person name="Rose D.J."/>
            <person name="Darling A."/>
            <person name="Mau B."/>
            <person name="Perna N.T."/>
            <person name="Payne S.M."/>
            <person name="Runyen-Janecky L.J."/>
            <person name="Zhou S."/>
            <person name="Schwartz D.C."/>
            <person name="Blattner F.R."/>
        </authorList>
    </citation>
    <scope>NUCLEOTIDE SEQUENCE [LARGE SCALE GENOMIC DNA]</scope>
    <source>
        <strain>ATCC 700930 / 2457T / Serotype 2a</strain>
    </source>
</reference>
<name>ULAG_SHIFL</name>
<accession>Q83IJ0</accession>
<accession>Q7BYI7</accession>
<protein>
    <recommendedName>
        <fullName evidence="1">Probable L-ascorbate-6-phosphate lactonase UlaG</fullName>
        <ecNumber evidence="1">3.1.1.-</ecNumber>
    </recommendedName>
    <alternativeName>
        <fullName evidence="1">L-ascorbate utilization protein G</fullName>
    </alternativeName>
</protein>
<gene>
    <name evidence="1" type="primary">ulaG</name>
    <name type="ordered locus">SF4347</name>
    <name type="ordered locus">S4617</name>
</gene>
<evidence type="ECO:0000255" key="1">
    <source>
        <dbReference type="HAMAP-Rule" id="MF_01266"/>
    </source>
</evidence>
<evidence type="ECO:0000305" key="2"/>
<organism>
    <name type="scientific">Shigella flexneri</name>
    <dbReference type="NCBI Taxonomy" id="623"/>
    <lineage>
        <taxon>Bacteria</taxon>
        <taxon>Pseudomonadati</taxon>
        <taxon>Pseudomonadota</taxon>
        <taxon>Gammaproteobacteria</taxon>
        <taxon>Enterobacterales</taxon>
        <taxon>Enterobacteriaceae</taxon>
        <taxon>Shigella</taxon>
    </lineage>
</organism>
<keyword id="KW-0963">Cytoplasm</keyword>
<keyword id="KW-0378">Hydrolase</keyword>
<keyword id="KW-1185">Reference proteome</keyword>
<sequence length="354" mass="40043">MSKVKSITRESWILSTFPEWGSWLNEEIEQEQVAPGTFAMWWLGCTGIWLKSEGGTNVCVDFWCGTGKQSHGNPLMKQGHQMQRMAGVKKLQPNLRTTPFVLDPFAIRQIDAVLATHDHNDHIDVNVAAAVMQNCADDVPFIGPKTCVDLWIGWGVPKERCIVVKPGDVVKVKDIEIHALDAFDRTALITLPADQKAAGVLPDGMDDRAVNYLFKTPGGSLYHSGDSHYSNYYAKHGNEHQIDVALGSYGENPRGITDKMTSADMLRMGEALNAKVVIPFHHDIWSNFQADPQEIRVLWEIKKDRLKYGFKPFIWQVGGKFTWPLDKDNFEYHYPRGFDDCFTIEPDLPFKSFL</sequence>
<feature type="chain" id="PRO_0000231491" description="Probable L-ascorbate-6-phosphate lactonase UlaG">
    <location>
        <begin position="1"/>
        <end position="354"/>
    </location>
</feature>